<dbReference type="EC" id="4.1.3.39" evidence="1"/>
<dbReference type="EMBL" id="CP000480">
    <property type="protein sequence ID" value="ABK71527.1"/>
    <property type="molecule type" value="Genomic_DNA"/>
</dbReference>
<dbReference type="EMBL" id="CP001663">
    <property type="protein sequence ID" value="AFP40510.1"/>
    <property type="molecule type" value="Genomic_DNA"/>
</dbReference>
<dbReference type="RefSeq" id="YP_888430.1">
    <property type="nucleotide sequence ID" value="NC_008596.1"/>
</dbReference>
<dbReference type="SMR" id="A0QZU2"/>
<dbReference type="STRING" id="246196.MSMEG_4150"/>
<dbReference type="PaxDb" id="246196-MSMEI_4052"/>
<dbReference type="KEGG" id="msb:LJ00_20580"/>
<dbReference type="KEGG" id="msg:MSMEI_4052"/>
<dbReference type="KEGG" id="msm:MSMEG_4150"/>
<dbReference type="PATRIC" id="fig|246196.19.peg.4074"/>
<dbReference type="eggNOG" id="COG0119">
    <property type="taxonomic scope" value="Bacteria"/>
</dbReference>
<dbReference type="OrthoDB" id="9803573at2"/>
<dbReference type="Proteomes" id="UP000000757">
    <property type="component" value="Chromosome"/>
</dbReference>
<dbReference type="Proteomes" id="UP000006158">
    <property type="component" value="Chromosome"/>
</dbReference>
<dbReference type="GO" id="GO:0003852">
    <property type="term" value="F:2-isopropylmalate synthase activity"/>
    <property type="evidence" value="ECO:0007669"/>
    <property type="project" value="TreeGrafter"/>
</dbReference>
<dbReference type="GO" id="GO:0008701">
    <property type="term" value="F:4-hydroxy-2-oxovalerate aldolase activity"/>
    <property type="evidence" value="ECO:0007669"/>
    <property type="project" value="UniProtKB-UniRule"/>
</dbReference>
<dbReference type="GO" id="GO:0030145">
    <property type="term" value="F:manganese ion binding"/>
    <property type="evidence" value="ECO:0007669"/>
    <property type="project" value="UniProtKB-UniRule"/>
</dbReference>
<dbReference type="GO" id="GO:0009056">
    <property type="term" value="P:catabolic process"/>
    <property type="evidence" value="ECO:0007669"/>
    <property type="project" value="UniProtKB-KW"/>
</dbReference>
<dbReference type="GO" id="GO:0009098">
    <property type="term" value="P:L-leucine biosynthetic process"/>
    <property type="evidence" value="ECO:0007669"/>
    <property type="project" value="TreeGrafter"/>
</dbReference>
<dbReference type="CDD" id="cd07943">
    <property type="entry name" value="DRE_TIM_HOA"/>
    <property type="match status" value="1"/>
</dbReference>
<dbReference type="Gene3D" id="1.10.8.60">
    <property type="match status" value="1"/>
</dbReference>
<dbReference type="Gene3D" id="3.20.20.70">
    <property type="entry name" value="Aldolase class I"/>
    <property type="match status" value="1"/>
</dbReference>
<dbReference type="HAMAP" id="MF_01656">
    <property type="entry name" value="HOA"/>
    <property type="match status" value="1"/>
</dbReference>
<dbReference type="InterPro" id="IPR050073">
    <property type="entry name" value="2-IPM_HCS-like"/>
</dbReference>
<dbReference type="InterPro" id="IPR017629">
    <property type="entry name" value="4OH_2_O-val_aldolase"/>
</dbReference>
<dbReference type="InterPro" id="IPR013785">
    <property type="entry name" value="Aldolase_TIM"/>
</dbReference>
<dbReference type="InterPro" id="IPR012425">
    <property type="entry name" value="DmpG_comm"/>
</dbReference>
<dbReference type="InterPro" id="IPR035685">
    <property type="entry name" value="DRE_TIM_HOA"/>
</dbReference>
<dbReference type="InterPro" id="IPR000891">
    <property type="entry name" value="PYR_CT"/>
</dbReference>
<dbReference type="NCBIfam" id="TIGR03217">
    <property type="entry name" value="4OH_2_O_val_ald"/>
    <property type="match status" value="1"/>
</dbReference>
<dbReference type="NCBIfam" id="NF006049">
    <property type="entry name" value="PRK08195.1"/>
    <property type="match status" value="1"/>
</dbReference>
<dbReference type="PANTHER" id="PTHR10277:SF9">
    <property type="entry name" value="2-ISOPROPYLMALATE SYNTHASE 1, CHLOROPLASTIC-RELATED"/>
    <property type="match status" value="1"/>
</dbReference>
<dbReference type="PANTHER" id="PTHR10277">
    <property type="entry name" value="HOMOCITRATE SYNTHASE-RELATED"/>
    <property type="match status" value="1"/>
</dbReference>
<dbReference type="Pfam" id="PF07836">
    <property type="entry name" value="DmpG_comm"/>
    <property type="match status" value="1"/>
</dbReference>
<dbReference type="Pfam" id="PF00682">
    <property type="entry name" value="HMGL-like"/>
    <property type="match status" value="1"/>
</dbReference>
<dbReference type="SUPFAM" id="SSF51569">
    <property type="entry name" value="Aldolase"/>
    <property type="match status" value="1"/>
</dbReference>
<dbReference type="SUPFAM" id="SSF89000">
    <property type="entry name" value="post-HMGL domain-like"/>
    <property type="match status" value="1"/>
</dbReference>
<dbReference type="PROSITE" id="PS50991">
    <property type="entry name" value="PYR_CT"/>
    <property type="match status" value="1"/>
</dbReference>
<accession>A0QZU2</accession>
<accession>I7FGG7</accession>
<gene>
    <name type="ordered locus">MSMEG_4150</name>
    <name type="ordered locus">MSMEI_4052</name>
</gene>
<proteinExistence type="inferred from homology"/>
<feature type="chain" id="PRO_0000387854" description="4-hydroxy-2-oxovalerate aldolase 1">
    <location>
        <begin position="1"/>
        <end position="346"/>
    </location>
</feature>
<feature type="domain" description="Pyruvate carboxyltransferase" evidence="1">
    <location>
        <begin position="6"/>
        <end position="258"/>
    </location>
</feature>
<feature type="active site" description="Proton acceptor" evidence="1">
    <location>
        <position position="18"/>
    </location>
</feature>
<feature type="binding site" evidence="1">
    <location>
        <begin position="14"/>
        <end position="15"/>
    </location>
    <ligand>
        <name>substrate</name>
    </ligand>
</feature>
<feature type="binding site" evidence="1">
    <location>
        <position position="15"/>
    </location>
    <ligand>
        <name>Mn(2+)</name>
        <dbReference type="ChEBI" id="CHEBI:29035"/>
    </ligand>
</feature>
<feature type="binding site" evidence="1">
    <location>
        <position position="168"/>
    </location>
    <ligand>
        <name>substrate</name>
    </ligand>
</feature>
<feature type="binding site" evidence="1">
    <location>
        <position position="197"/>
    </location>
    <ligand>
        <name>Mn(2+)</name>
        <dbReference type="ChEBI" id="CHEBI:29035"/>
    </ligand>
</feature>
<feature type="binding site" evidence="1">
    <location>
        <position position="197"/>
    </location>
    <ligand>
        <name>substrate</name>
    </ligand>
</feature>
<feature type="binding site" evidence="1">
    <location>
        <position position="199"/>
    </location>
    <ligand>
        <name>Mn(2+)</name>
        <dbReference type="ChEBI" id="CHEBI:29035"/>
    </ligand>
</feature>
<feature type="binding site" evidence="1">
    <location>
        <position position="288"/>
    </location>
    <ligand>
        <name>substrate</name>
    </ligand>
</feature>
<feature type="site" description="Transition state stabilizer" evidence="1">
    <location>
        <position position="14"/>
    </location>
</feature>
<evidence type="ECO:0000255" key="1">
    <source>
        <dbReference type="HAMAP-Rule" id="MF_01656"/>
    </source>
</evidence>
<name>HOA1_MYCS2</name>
<organism>
    <name type="scientific">Mycolicibacterium smegmatis (strain ATCC 700084 / mc(2)155)</name>
    <name type="common">Mycobacterium smegmatis</name>
    <dbReference type="NCBI Taxonomy" id="246196"/>
    <lineage>
        <taxon>Bacteria</taxon>
        <taxon>Bacillati</taxon>
        <taxon>Actinomycetota</taxon>
        <taxon>Actinomycetes</taxon>
        <taxon>Mycobacteriales</taxon>
        <taxon>Mycobacteriaceae</taxon>
        <taxon>Mycolicibacterium</taxon>
    </lineage>
</organism>
<comment type="catalytic activity">
    <reaction evidence="1">
        <text>(S)-4-hydroxy-2-oxopentanoate = acetaldehyde + pyruvate</text>
        <dbReference type="Rhea" id="RHEA:22624"/>
        <dbReference type="ChEBI" id="CHEBI:15343"/>
        <dbReference type="ChEBI" id="CHEBI:15361"/>
        <dbReference type="ChEBI" id="CHEBI:73143"/>
        <dbReference type="EC" id="4.1.3.39"/>
    </reaction>
</comment>
<comment type="similarity">
    <text evidence="1">Belongs to the 4-hydroxy-2-oxovalerate aldolase family.</text>
</comment>
<reference key="1">
    <citation type="submission" date="2006-10" db="EMBL/GenBank/DDBJ databases">
        <authorList>
            <person name="Fleischmann R.D."/>
            <person name="Dodson R.J."/>
            <person name="Haft D.H."/>
            <person name="Merkel J.S."/>
            <person name="Nelson W.C."/>
            <person name="Fraser C.M."/>
        </authorList>
    </citation>
    <scope>NUCLEOTIDE SEQUENCE [LARGE SCALE GENOMIC DNA]</scope>
    <source>
        <strain>ATCC 700084 / mc(2)155</strain>
    </source>
</reference>
<reference key="2">
    <citation type="journal article" date="2007" name="Genome Biol.">
        <title>Interrupted coding sequences in Mycobacterium smegmatis: authentic mutations or sequencing errors?</title>
        <authorList>
            <person name="Deshayes C."/>
            <person name="Perrodou E."/>
            <person name="Gallien S."/>
            <person name="Euphrasie D."/>
            <person name="Schaeffer C."/>
            <person name="Van-Dorsselaer A."/>
            <person name="Poch O."/>
            <person name="Lecompte O."/>
            <person name="Reyrat J.-M."/>
        </authorList>
    </citation>
    <scope>NUCLEOTIDE SEQUENCE [LARGE SCALE GENOMIC DNA]</scope>
    <source>
        <strain>ATCC 700084 / mc(2)155</strain>
    </source>
</reference>
<reference key="3">
    <citation type="journal article" date="2009" name="Genome Res.">
        <title>Ortho-proteogenomics: multiple proteomes investigation through orthology and a new MS-based protocol.</title>
        <authorList>
            <person name="Gallien S."/>
            <person name="Perrodou E."/>
            <person name="Carapito C."/>
            <person name="Deshayes C."/>
            <person name="Reyrat J.-M."/>
            <person name="Van Dorsselaer A."/>
            <person name="Poch O."/>
            <person name="Schaeffer C."/>
            <person name="Lecompte O."/>
        </authorList>
    </citation>
    <scope>NUCLEOTIDE SEQUENCE [LARGE SCALE GENOMIC DNA]</scope>
    <source>
        <strain>ATCC 700084 / mc(2)155</strain>
    </source>
</reference>
<keyword id="KW-0058">Aromatic hydrocarbons catabolism</keyword>
<keyword id="KW-0456">Lyase</keyword>
<keyword id="KW-0464">Manganese</keyword>
<keyword id="KW-0479">Metal-binding</keyword>
<keyword id="KW-1185">Reference proteome</keyword>
<protein>
    <recommendedName>
        <fullName evidence="1">4-hydroxy-2-oxovalerate aldolase 1</fullName>
        <shortName evidence="1">HOA 1</shortName>
        <ecNumber evidence="1">4.1.3.39</ecNumber>
    </recommendedName>
    <alternativeName>
        <fullName evidence="1">4-hydroxy-2-keto-pentanoic acid aldolase 1</fullName>
    </alternativeName>
    <alternativeName>
        <fullName evidence="1">4-hydroxy-2-oxopentanoate aldolase 1</fullName>
    </alternativeName>
</protein>
<sequence>MTMTRLFITDVTLRDGMHAIGHRYDRGQVREIAAALDEAGVDAIEVGHGDGLNGSSLAYGFSRHSDLSYIHEAASVTRRAKLACVLLPGIGTIEDLKRARDSGIELVRIATHCTEADVSAQHISAAVELGFHVSGFLMMSSATTPENIGVQAAKMESYGAQCVYIADSAGNLTPAGTTARFQALEAALDGATQRGIHAHENLSLSVANTVVAVENGARRVDAALAGMGAGAGNCPIEAFIAVANKYGWEHGCELFKLQDAAEDLVRPLQDRPVRVDRQTLTLGYAGVYSSFLRHAERAANEFDIDVREIILEIGRRELIGGQEDMIIDVALDLAAHQSAQSPNRTG</sequence>